<accession>Q9LI89</accession>
<sequence length="422" mass="47182">MLTLGEDQIGRIGASSSWSRSKKLRVHRYEIPDLNVEPSLDWDGEETGEATKALSSTCLKPKDADYCLLNVPQLVYELEVEILARVPRFEYWKLKLLNKGFSRLLKSDEIFKVRRERGVVEPSVFMLSSGDTCWTMFDKGFGNCQKLPELPSDICFLHGDKESLCAGTHLIVTGKEEKSIALWRYELETSKWFKGPAMITPRILFASATCGTVVFVAGGLKIEGNGTMEVVDSVEKYDSKTKTWTLLRGMHKRRKFCSGCYLRGKFYVLGGRDENGQNLTCGESYDEKTNTWELIPDILKDMSFSSVQSPPLIAVVGDDLYSLETSANELRVYDANANSWKKLGDVPVRAKSNGGWGVAFKSLGDKLLVIGASAGPSRAETMSVYTSRPSANPANKLYWEESKRCCGVRFNHFILNCCVMIA</sequence>
<organism>
    <name type="scientific">Arabidopsis thaliana</name>
    <name type="common">Mouse-ear cress</name>
    <dbReference type="NCBI Taxonomy" id="3702"/>
    <lineage>
        <taxon>Eukaryota</taxon>
        <taxon>Viridiplantae</taxon>
        <taxon>Streptophyta</taxon>
        <taxon>Embryophyta</taxon>
        <taxon>Tracheophyta</taxon>
        <taxon>Spermatophyta</taxon>
        <taxon>Magnoliopsida</taxon>
        <taxon>eudicotyledons</taxon>
        <taxon>Gunneridae</taxon>
        <taxon>Pentapetalae</taxon>
        <taxon>rosids</taxon>
        <taxon>malvids</taxon>
        <taxon>Brassicales</taxon>
        <taxon>Brassicaceae</taxon>
        <taxon>Camelineae</taxon>
        <taxon>Arabidopsis</taxon>
    </lineage>
</organism>
<protein>
    <recommendedName>
        <fullName>F-box/kelch-repeat protein At3g27150</fullName>
    </recommendedName>
</protein>
<feature type="chain" id="PRO_0000283230" description="F-box/kelch-repeat protein At3g27150">
    <location>
        <begin position="1"/>
        <end position="422"/>
    </location>
</feature>
<feature type="domain" description="F-box">
    <location>
        <begin position="68"/>
        <end position="114"/>
    </location>
</feature>
<feature type="repeat" description="Kelch 1">
    <location>
        <begin position="162"/>
        <end position="212"/>
    </location>
</feature>
<feature type="repeat" description="Kelch 2">
    <location>
        <begin position="213"/>
        <end position="264"/>
    </location>
</feature>
<feature type="repeat" description="Kelch 3">
    <location>
        <begin position="266"/>
        <end position="312"/>
    </location>
</feature>
<feature type="repeat" description="Kelch 4">
    <location>
        <begin position="314"/>
        <end position="361"/>
    </location>
</feature>
<feature type="repeat" description="Kelch 5">
    <location>
        <begin position="366"/>
        <end position="412"/>
    </location>
</feature>
<reference key="1">
    <citation type="journal article" date="2000" name="DNA Res.">
        <title>Structural analysis of Arabidopsis thaliana chromosome 3. II. Sequence features of the 4,251,695 bp regions covered by 90 P1, TAC and BAC clones.</title>
        <authorList>
            <person name="Kaneko T."/>
            <person name="Katoh T."/>
            <person name="Sato S."/>
            <person name="Nakamura Y."/>
            <person name="Asamizu E."/>
            <person name="Tabata S."/>
        </authorList>
    </citation>
    <scope>NUCLEOTIDE SEQUENCE [LARGE SCALE GENOMIC DNA]</scope>
    <source>
        <strain>cv. Columbia</strain>
    </source>
</reference>
<reference key="2">
    <citation type="journal article" date="2017" name="Plant J.">
        <title>Araport11: a complete reannotation of the Arabidopsis thaliana reference genome.</title>
        <authorList>
            <person name="Cheng C.Y."/>
            <person name="Krishnakumar V."/>
            <person name="Chan A.P."/>
            <person name="Thibaud-Nissen F."/>
            <person name="Schobel S."/>
            <person name="Town C.D."/>
        </authorList>
    </citation>
    <scope>GENOME REANNOTATION</scope>
    <source>
        <strain>cv. Columbia</strain>
    </source>
</reference>
<gene>
    <name type="ordered locus">At3g27150</name>
    <name type="ORF">MYF5.2</name>
</gene>
<dbReference type="EMBL" id="AP001312">
    <property type="protein sequence ID" value="BAB01932.1"/>
    <property type="molecule type" value="Genomic_DNA"/>
</dbReference>
<dbReference type="EMBL" id="CP002686">
    <property type="protein sequence ID" value="AEE77273.1"/>
    <property type="molecule type" value="Genomic_DNA"/>
</dbReference>
<dbReference type="EMBL" id="CP002686">
    <property type="protein sequence ID" value="ANM63869.1"/>
    <property type="molecule type" value="Genomic_DNA"/>
</dbReference>
<dbReference type="RefSeq" id="NP_001319655.1">
    <property type="nucleotide sequence ID" value="NM_001338859.1"/>
</dbReference>
<dbReference type="RefSeq" id="NP_189351.1">
    <property type="nucleotide sequence ID" value="NM_113629.3"/>
</dbReference>
<dbReference type="SMR" id="Q9LI89"/>
<dbReference type="STRING" id="3702.Q9LI89"/>
<dbReference type="PaxDb" id="3702-AT3G27150.1"/>
<dbReference type="EnsemblPlants" id="AT3G27150.1">
    <property type="protein sequence ID" value="AT3G27150.1"/>
    <property type="gene ID" value="AT3G27150"/>
</dbReference>
<dbReference type="EnsemblPlants" id="AT3G27150.2">
    <property type="protein sequence ID" value="AT3G27150.2"/>
    <property type="gene ID" value="AT3G27150"/>
</dbReference>
<dbReference type="GeneID" id="822334"/>
<dbReference type="Gramene" id="AT3G27150.1">
    <property type="protein sequence ID" value="AT3G27150.1"/>
    <property type="gene ID" value="AT3G27150"/>
</dbReference>
<dbReference type="Gramene" id="AT3G27150.2">
    <property type="protein sequence ID" value="AT3G27150.2"/>
    <property type="gene ID" value="AT3G27150"/>
</dbReference>
<dbReference type="KEGG" id="ath:AT3G27150"/>
<dbReference type="Araport" id="AT3G27150"/>
<dbReference type="TAIR" id="AT3G27150"/>
<dbReference type="eggNOG" id="KOG1072">
    <property type="taxonomic scope" value="Eukaryota"/>
</dbReference>
<dbReference type="HOGENOM" id="CLU_028510_0_0_1"/>
<dbReference type="InParanoid" id="Q9LI89"/>
<dbReference type="OMA" id="TCCPDPN"/>
<dbReference type="PhylomeDB" id="Q9LI89"/>
<dbReference type="PRO" id="PR:Q9LI89"/>
<dbReference type="Proteomes" id="UP000006548">
    <property type="component" value="Chromosome 3"/>
</dbReference>
<dbReference type="ExpressionAtlas" id="Q9LI89">
    <property type="expression patterns" value="baseline and differential"/>
</dbReference>
<dbReference type="GO" id="GO:0005634">
    <property type="term" value="C:nucleus"/>
    <property type="evidence" value="ECO:0000314"/>
    <property type="project" value="TAIR"/>
</dbReference>
<dbReference type="FunFam" id="2.120.10.80:FF:000007">
    <property type="entry name" value="F-box/kelch-repeat protein SKIP11"/>
    <property type="match status" value="1"/>
</dbReference>
<dbReference type="Gene3D" id="2.120.10.80">
    <property type="entry name" value="Kelch-type beta propeller"/>
    <property type="match status" value="1"/>
</dbReference>
<dbReference type="InterPro" id="IPR052439">
    <property type="entry name" value="F-box/Kelch-repeat"/>
</dbReference>
<dbReference type="InterPro" id="IPR015915">
    <property type="entry name" value="Kelch-typ_b-propeller"/>
</dbReference>
<dbReference type="InterPro" id="IPR006652">
    <property type="entry name" value="Kelch_1"/>
</dbReference>
<dbReference type="PANTHER" id="PTHR46122:SF5">
    <property type="entry name" value="F-BOX DOMAIN-CONTAINING PROTEIN"/>
    <property type="match status" value="1"/>
</dbReference>
<dbReference type="PANTHER" id="PTHR46122">
    <property type="entry name" value="GALACTOSE OXIDASE/KELCH REPEAT PROTEIN-RELATED"/>
    <property type="match status" value="1"/>
</dbReference>
<dbReference type="Pfam" id="PF01344">
    <property type="entry name" value="Kelch_1"/>
    <property type="match status" value="2"/>
</dbReference>
<dbReference type="SMART" id="SM00612">
    <property type="entry name" value="Kelch"/>
    <property type="match status" value="3"/>
</dbReference>
<dbReference type="SUPFAM" id="SSF117281">
    <property type="entry name" value="Kelch motif"/>
    <property type="match status" value="1"/>
</dbReference>
<name>FBK70_ARATH</name>
<keyword id="KW-0880">Kelch repeat</keyword>
<keyword id="KW-1185">Reference proteome</keyword>
<keyword id="KW-0677">Repeat</keyword>
<proteinExistence type="evidence at transcript level"/>